<reference key="1">
    <citation type="journal article" date="2002" name="DNA Res.">
        <title>Complete genomic sequence of nitrogen-fixing symbiotic bacterium Bradyrhizobium japonicum USDA110.</title>
        <authorList>
            <person name="Kaneko T."/>
            <person name="Nakamura Y."/>
            <person name="Sato S."/>
            <person name="Minamisawa K."/>
            <person name="Uchiumi T."/>
            <person name="Sasamoto S."/>
            <person name="Watanabe A."/>
            <person name="Idesawa K."/>
            <person name="Iriguchi M."/>
            <person name="Kawashima K."/>
            <person name="Kohara M."/>
            <person name="Matsumoto M."/>
            <person name="Shimpo S."/>
            <person name="Tsuruoka H."/>
            <person name="Wada T."/>
            <person name="Yamada M."/>
            <person name="Tabata S."/>
        </authorList>
    </citation>
    <scope>NUCLEOTIDE SEQUENCE [LARGE SCALE GENOMIC DNA]</scope>
    <source>
        <strain>JCM 10833 / BCRC 13528 / IAM 13628 / NBRC 14792 / USDA 110</strain>
    </source>
</reference>
<protein>
    <recommendedName>
        <fullName evidence="1">1-deoxy-D-xylulose-5-phosphate synthase</fullName>
        <ecNumber evidence="1">2.2.1.7</ecNumber>
    </recommendedName>
    <alternativeName>
        <fullName evidence="1">1-deoxyxylulose-5-phosphate synthase</fullName>
        <shortName evidence="1">DXP synthase</shortName>
        <shortName evidence="1">DXPS</shortName>
    </alternativeName>
</protein>
<proteinExistence type="inferred from homology"/>
<gene>
    <name evidence="1" type="primary">dxs</name>
    <name type="ordered locus">bll2651</name>
</gene>
<organism>
    <name type="scientific">Bradyrhizobium diazoefficiens (strain JCM 10833 / BCRC 13528 / IAM 13628 / NBRC 14792 / USDA 110)</name>
    <dbReference type="NCBI Taxonomy" id="224911"/>
    <lineage>
        <taxon>Bacteria</taxon>
        <taxon>Pseudomonadati</taxon>
        <taxon>Pseudomonadota</taxon>
        <taxon>Alphaproteobacteria</taxon>
        <taxon>Hyphomicrobiales</taxon>
        <taxon>Nitrobacteraceae</taxon>
        <taxon>Bradyrhizobium</taxon>
    </lineage>
</organism>
<accession>Q89RW1</accession>
<feature type="chain" id="PRO_0000189091" description="1-deoxy-D-xylulose-5-phosphate synthase">
    <location>
        <begin position="1"/>
        <end position="661"/>
    </location>
</feature>
<feature type="binding site" evidence="1">
    <location>
        <position position="98"/>
    </location>
    <ligand>
        <name>thiamine diphosphate</name>
        <dbReference type="ChEBI" id="CHEBI:58937"/>
    </ligand>
</feature>
<feature type="binding site" evidence="1">
    <location>
        <begin position="139"/>
        <end position="141"/>
    </location>
    <ligand>
        <name>thiamine diphosphate</name>
        <dbReference type="ChEBI" id="CHEBI:58937"/>
    </ligand>
</feature>
<feature type="binding site" evidence="1">
    <location>
        <position position="170"/>
    </location>
    <ligand>
        <name>Mg(2+)</name>
        <dbReference type="ChEBI" id="CHEBI:18420"/>
    </ligand>
</feature>
<feature type="binding site" evidence="1">
    <location>
        <begin position="171"/>
        <end position="172"/>
    </location>
    <ligand>
        <name>thiamine diphosphate</name>
        <dbReference type="ChEBI" id="CHEBI:58937"/>
    </ligand>
</feature>
<feature type="binding site" evidence="1">
    <location>
        <position position="199"/>
    </location>
    <ligand>
        <name>Mg(2+)</name>
        <dbReference type="ChEBI" id="CHEBI:18420"/>
    </ligand>
</feature>
<feature type="binding site" evidence="1">
    <location>
        <position position="199"/>
    </location>
    <ligand>
        <name>thiamine diphosphate</name>
        <dbReference type="ChEBI" id="CHEBI:58937"/>
    </ligand>
</feature>
<feature type="binding site" evidence="1">
    <location>
        <position position="309"/>
    </location>
    <ligand>
        <name>thiamine diphosphate</name>
        <dbReference type="ChEBI" id="CHEBI:58937"/>
    </ligand>
</feature>
<feature type="binding site" evidence="1">
    <location>
        <position position="391"/>
    </location>
    <ligand>
        <name>thiamine diphosphate</name>
        <dbReference type="ChEBI" id="CHEBI:58937"/>
    </ligand>
</feature>
<name>DXS_BRADU</name>
<keyword id="KW-0414">Isoprene biosynthesis</keyword>
<keyword id="KW-0460">Magnesium</keyword>
<keyword id="KW-0479">Metal-binding</keyword>
<keyword id="KW-1185">Reference proteome</keyword>
<keyword id="KW-0784">Thiamine biosynthesis</keyword>
<keyword id="KW-0786">Thiamine pyrophosphate</keyword>
<keyword id="KW-0808">Transferase</keyword>
<sequence length="661" mass="71263">MQTHRAPERPSGADKLEIAVNAYSKTPLLDTIRTPDDLRKLKIEQVRQVADELRQETIDAVSVTGGHFGAGLGVVELTTAIHYVFDTPRDRLIWDVGHQAYPHKILTGRRDRIRTLRTGGGLSGFTKRSESDYDPFGAAHSSTSISAGLGMAVARDLSGGKNNVIAVIGDGAMSAGMAYEAMNNAGAMNSRLIVILNDNDMSIAPPVGAMSAYLSRLYSGKTYRTLREAAKQINKRLPKIIANRANRVEEYSRGFMMDGGTLFEELGFYYVGPIDGHNLDHLLPVLKNVRDMEEGPILVHVVTQKGKGYGPAEASADKYHAVVKFDVATGTQAKAKPNAPAYQNVFGQSLVKEAQKDEKIVAITAAMPSGTGVDIFNKAFPDRTFDVGIAEQHAVTFAAGLASEGYKPFCAIYSTFLQRGYDQIVHDVAIQNLPVRFAIDRAGLVGADGATHAGSFDNAYLGCLPNMVIMAAADEAELVHMVATQVAIDDRPSSLRYPRGEGRGIEMPEVGIPLEIGKGRMIRQGSKIALLSFGTRLAECEKAADELAAHGLSTTIADARFMKPLDTELVLKLARDHEILITIEEGSVGGFGSHVAQFLTDQGALDSGMVKFRTMVLPDVFQDHDTPAAMYARAGLDAKGIVAKVFEALGKDVKTETVKLA</sequence>
<dbReference type="EC" id="2.2.1.7" evidence="1"/>
<dbReference type="EMBL" id="BA000040">
    <property type="protein sequence ID" value="BAC47916.1"/>
    <property type="molecule type" value="Genomic_DNA"/>
</dbReference>
<dbReference type="RefSeq" id="NP_769291.1">
    <property type="nucleotide sequence ID" value="NC_004463.1"/>
</dbReference>
<dbReference type="SMR" id="Q89RW1"/>
<dbReference type="FunCoup" id="Q89RW1">
    <property type="interactions" value="605"/>
</dbReference>
<dbReference type="STRING" id="224911.AAV28_10250"/>
<dbReference type="EnsemblBacteria" id="BAC47916">
    <property type="protein sequence ID" value="BAC47916"/>
    <property type="gene ID" value="BAC47916"/>
</dbReference>
<dbReference type="KEGG" id="bja:bll2651"/>
<dbReference type="PATRIC" id="fig|224911.5.peg.2626"/>
<dbReference type="eggNOG" id="COG1154">
    <property type="taxonomic scope" value="Bacteria"/>
</dbReference>
<dbReference type="HOGENOM" id="CLU_009227_1_4_5"/>
<dbReference type="InParanoid" id="Q89RW1"/>
<dbReference type="OrthoDB" id="9803371at2"/>
<dbReference type="PhylomeDB" id="Q89RW1"/>
<dbReference type="UniPathway" id="UPA00064">
    <property type="reaction ID" value="UER00091"/>
</dbReference>
<dbReference type="Proteomes" id="UP000002526">
    <property type="component" value="Chromosome"/>
</dbReference>
<dbReference type="GO" id="GO:0008661">
    <property type="term" value="F:1-deoxy-D-xylulose-5-phosphate synthase activity"/>
    <property type="evidence" value="ECO:0007669"/>
    <property type="project" value="UniProtKB-UniRule"/>
</dbReference>
<dbReference type="GO" id="GO:0000287">
    <property type="term" value="F:magnesium ion binding"/>
    <property type="evidence" value="ECO:0007669"/>
    <property type="project" value="UniProtKB-UniRule"/>
</dbReference>
<dbReference type="GO" id="GO:0030976">
    <property type="term" value="F:thiamine pyrophosphate binding"/>
    <property type="evidence" value="ECO:0007669"/>
    <property type="project" value="UniProtKB-UniRule"/>
</dbReference>
<dbReference type="GO" id="GO:0016744">
    <property type="term" value="F:transketolase or transaldolase activity"/>
    <property type="evidence" value="ECO:0000318"/>
    <property type="project" value="GO_Central"/>
</dbReference>
<dbReference type="GO" id="GO:0052865">
    <property type="term" value="P:1-deoxy-D-xylulose 5-phosphate biosynthetic process"/>
    <property type="evidence" value="ECO:0007669"/>
    <property type="project" value="UniProtKB-UniPathway"/>
</dbReference>
<dbReference type="GO" id="GO:0019682">
    <property type="term" value="P:glyceraldehyde-3-phosphate metabolic process"/>
    <property type="evidence" value="ECO:0007669"/>
    <property type="project" value="UniProtKB-ARBA"/>
</dbReference>
<dbReference type="GO" id="GO:0016114">
    <property type="term" value="P:terpenoid biosynthetic process"/>
    <property type="evidence" value="ECO:0007669"/>
    <property type="project" value="UniProtKB-UniRule"/>
</dbReference>
<dbReference type="GO" id="GO:0009228">
    <property type="term" value="P:thiamine biosynthetic process"/>
    <property type="evidence" value="ECO:0007669"/>
    <property type="project" value="UniProtKB-UniRule"/>
</dbReference>
<dbReference type="CDD" id="cd02007">
    <property type="entry name" value="TPP_DXS"/>
    <property type="match status" value="1"/>
</dbReference>
<dbReference type="CDD" id="cd07033">
    <property type="entry name" value="TPP_PYR_DXS_TK_like"/>
    <property type="match status" value="1"/>
</dbReference>
<dbReference type="FunFam" id="3.40.50.920:FF:000002">
    <property type="entry name" value="1-deoxy-D-xylulose-5-phosphate synthase"/>
    <property type="match status" value="1"/>
</dbReference>
<dbReference type="FunFam" id="3.40.50.970:FF:000005">
    <property type="entry name" value="1-deoxy-D-xylulose-5-phosphate synthase"/>
    <property type="match status" value="1"/>
</dbReference>
<dbReference type="Gene3D" id="3.40.50.920">
    <property type="match status" value="1"/>
</dbReference>
<dbReference type="Gene3D" id="3.40.50.970">
    <property type="match status" value="2"/>
</dbReference>
<dbReference type="HAMAP" id="MF_00315">
    <property type="entry name" value="DXP_synth"/>
    <property type="match status" value="1"/>
</dbReference>
<dbReference type="InterPro" id="IPR005477">
    <property type="entry name" value="Dxylulose-5-P_synthase"/>
</dbReference>
<dbReference type="InterPro" id="IPR029061">
    <property type="entry name" value="THDP-binding"/>
</dbReference>
<dbReference type="InterPro" id="IPR009014">
    <property type="entry name" value="Transketo_C/PFOR_II"/>
</dbReference>
<dbReference type="InterPro" id="IPR005475">
    <property type="entry name" value="Transketolase-like_Pyr-bd"/>
</dbReference>
<dbReference type="InterPro" id="IPR020826">
    <property type="entry name" value="Transketolase_BS"/>
</dbReference>
<dbReference type="InterPro" id="IPR033248">
    <property type="entry name" value="Transketolase_C"/>
</dbReference>
<dbReference type="InterPro" id="IPR049557">
    <property type="entry name" value="Transketolase_CS"/>
</dbReference>
<dbReference type="NCBIfam" id="TIGR00204">
    <property type="entry name" value="dxs"/>
    <property type="match status" value="1"/>
</dbReference>
<dbReference type="NCBIfam" id="NF003933">
    <property type="entry name" value="PRK05444.2-2"/>
    <property type="match status" value="1"/>
</dbReference>
<dbReference type="PANTHER" id="PTHR43322">
    <property type="entry name" value="1-D-DEOXYXYLULOSE 5-PHOSPHATE SYNTHASE-RELATED"/>
    <property type="match status" value="1"/>
</dbReference>
<dbReference type="PANTHER" id="PTHR43322:SF5">
    <property type="entry name" value="1-DEOXY-D-XYLULOSE-5-PHOSPHATE SYNTHASE, CHLOROPLASTIC"/>
    <property type="match status" value="1"/>
</dbReference>
<dbReference type="Pfam" id="PF13292">
    <property type="entry name" value="DXP_synthase_N"/>
    <property type="match status" value="1"/>
</dbReference>
<dbReference type="Pfam" id="PF02779">
    <property type="entry name" value="Transket_pyr"/>
    <property type="match status" value="1"/>
</dbReference>
<dbReference type="Pfam" id="PF02780">
    <property type="entry name" value="Transketolase_C"/>
    <property type="match status" value="1"/>
</dbReference>
<dbReference type="SMART" id="SM00861">
    <property type="entry name" value="Transket_pyr"/>
    <property type="match status" value="1"/>
</dbReference>
<dbReference type="SUPFAM" id="SSF52518">
    <property type="entry name" value="Thiamin diphosphate-binding fold (THDP-binding)"/>
    <property type="match status" value="2"/>
</dbReference>
<dbReference type="SUPFAM" id="SSF52922">
    <property type="entry name" value="TK C-terminal domain-like"/>
    <property type="match status" value="1"/>
</dbReference>
<dbReference type="PROSITE" id="PS00801">
    <property type="entry name" value="TRANSKETOLASE_1"/>
    <property type="match status" value="1"/>
</dbReference>
<dbReference type="PROSITE" id="PS00802">
    <property type="entry name" value="TRANSKETOLASE_2"/>
    <property type="match status" value="1"/>
</dbReference>
<comment type="function">
    <text evidence="1">Catalyzes the acyloin condensation reaction between C atoms 2 and 3 of pyruvate and glyceraldehyde 3-phosphate to yield 1-deoxy-D-xylulose-5-phosphate (DXP).</text>
</comment>
<comment type="catalytic activity">
    <reaction evidence="1">
        <text>D-glyceraldehyde 3-phosphate + pyruvate + H(+) = 1-deoxy-D-xylulose 5-phosphate + CO2</text>
        <dbReference type="Rhea" id="RHEA:12605"/>
        <dbReference type="ChEBI" id="CHEBI:15361"/>
        <dbReference type="ChEBI" id="CHEBI:15378"/>
        <dbReference type="ChEBI" id="CHEBI:16526"/>
        <dbReference type="ChEBI" id="CHEBI:57792"/>
        <dbReference type="ChEBI" id="CHEBI:59776"/>
        <dbReference type="EC" id="2.2.1.7"/>
    </reaction>
</comment>
<comment type="cofactor">
    <cofactor evidence="1">
        <name>Mg(2+)</name>
        <dbReference type="ChEBI" id="CHEBI:18420"/>
    </cofactor>
    <text evidence="1">Binds 1 Mg(2+) ion per subunit.</text>
</comment>
<comment type="cofactor">
    <cofactor evidence="1">
        <name>thiamine diphosphate</name>
        <dbReference type="ChEBI" id="CHEBI:58937"/>
    </cofactor>
    <text evidence="1">Binds 1 thiamine pyrophosphate per subunit.</text>
</comment>
<comment type="pathway">
    <text evidence="1">Metabolic intermediate biosynthesis; 1-deoxy-D-xylulose 5-phosphate biosynthesis; 1-deoxy-D-xylulose 5-phosphate from D-glyceraldehyde 3-phosphate and pyruvate: step 1/1.</text>
</comment>
<comment type="subunit">
    <text evidence="1">Homodimer.</text>
</comment>
<comment type="similarity">
    <text evidence="1">Belongs to the transketolase family. DXPS subfamily.</text>
</comment>
<evidence type="ECO:0000255" key="1">
    <source>
        <dbReference type="HAMAP-Rule" id="MF_00315"/>
    </source>
</evidence>